<comment type="function">
    <text evidence="2">F(1)F(0) ATP synthase produces ATP from ADP in the presence of a proton or sodium gradient. F-type ATPases consist of two structural domains, F(1) containing the extramembraneous catalytic core and F(0) containing the membrane proton channel, linked together by a central stalk and a peripheral stalk. During catalysis, ATP synthesis in the catalytic domain of F(1) is coupled via a rotary mechanism of the central stalk subunits to proton translocation.</text>
</comment>
<comment type="function">
    <text evidence="2">Key component of the F(0) channel; it plays a direct role in translocation across the membrane. A homomeric c-ring of between 10-14 subunits forms the central stalk rotor element with the F(1) delta and epsilon subunits.</text>
</comment>
<comment type="subunit">
    <text evidence="2">F-type ATPases have 2 components, F(1) - the catalytic core - and F(0) - the membrane proton channel. F(1) has five subunits: alpha(3), beta(3), gamma(1), delta(1), epsilon(1). F(0) has three main subunits: a(1), b(2) and c(10-14). The alpha and beta chains form an alternating ring which encloses part of the gamma chain. F(1) is attached to F(0) by a central stalk formed by the gamma and epsilon chains, while a peripheral stalk is formed by the delta and b chains.</text>
</comment>
<comment type="subcellular location">
    <subcellularLocation>
        <location evidence="2">Cell membrane</location>
        <topology evidence="2">Multi-pass membrane protein</topology>
    </subcellularLocation>
</comment>
<comment type="miscellaneous">
    <text evidence="1">Dicyclohexylcarbodiimide (DCDD) binding to the active glutamate residue inhibits ATPase in vitro.</text>
</comment>
<comment type="similarity">
    <text evidence="2">Belongs to the ATPase C chain family.</text>
</comment>
<keyword id="KW-0066">ATP synthesis</keyword>
<keyword id="KW-1003">Cell membrane</keyword>
<keyword id="KW-0138">CF(0)</keyword>
<keyword id="KW-0375">Hydrogen ion transport</keyword>
<keyword id="KW-0406">Ion transport</keyword>
<keyword id="KW-0446">Lipid-binding</keyword>
<keyword id="KW-0472">Membrane</keyword>
<keyword id="KW-1185">Reference proteome</keyword>
<keyword id="KW-0812">Transmembrane</keyword>
<keyword id="KW-1133">Transmembrane helix</keyword>
<keyword id="KW-0813">Transport</keyword>
<protein>
    <recommendedName>
        <fullName evidence="2">ATP synthase subunit c</fullName>
    </recommendedName>
    <alternativeName>
        <fullName evidence="2">ATP synthase F(0) sector subunit c</fullName>
    </alternativeName>
    <alternativeName>
        <fullName evidence="2">F-type ATPase subunit c</fullName>
        <shortName evidence="2">F-ATPase subunit c</shortName>
    </alternativeName>
    <alternativeName>
        <fullName evidence="2">Lipid-binding protein</fullName>
    </alternativeName>
</protein>
<name>ATPL_MYCLE</name>
<accession>P45828</accession>
<reference key="1">
    <citation type="submission" date="1994-09" db="EMBL/GenBank/DDBJ databases">
        <authorList>
            <person name="Smith D.R."/>
            <person name="Robison K."/>
        </authorList>
    </citation>
    <scope>NUCLEOTIDE SEQUENCE [GENOMIC DNA]</scope>
</reference>
<reference key="2">
    <citation type="journal article" date="2001" name="Nature">
        <title>Massive gene decay in the leprosy bacillus.</title>
        <authorList>
            <person name="Cole S.T."/>
            <person name="Eiglmeier K."/>
            <person name="Parkhill J."/>
            <person name="James K.D."/>
            <person name="Thomson N.R."/>
            <person name="Wheeler P.R."/>
            <person name="Honore N."/>
            <person name="Garnier T."/>
            <person name="Churcher C.M."/>
            <person name="Harris D.E."/>
            <person name="Mungall K.L."/>
            <person name="Basham D."/>
            <person name="Brown D."/>
            <person name="Chillingworth T."/>
            <person name="Connor R."/>
            <person name="Davies R.M."/>
            <person name="Devlin K."/>
            <person name="Duthoy S."/>
            <person name="Feltwell T."/>
            <person name="Fraser A."/>
            <person name="Hamlin N."/>
            <person name="Holroyd S."/>
            <person name="Hornsby T."/>
            <person name="Jagels K."/>
            <person name="Lacroix C."/>
            <person name="Maclean J."/>
            <person name="Moule S."/>
            <person name="Murphy L.D."/>
            <person name="Oliver K."/>
            <person name="Quail M.A."/>
            <person name="Rajandream M.A."/>
            <person name="Rutherford K.M."/>
            <person name="Rutter S."/>
            <person name="Seeger K."/>
            <person name="Simon S."/>
            <person name="Simmonds M."/>
            <person name="Skelton J."/>
            <person name="Squares R."/>
            <person name="Squares S."/>
            <person name="Stevens K."/>
            <person name="Taylor K."/>
            <person name="Whitehead S."/>
            <person name="Woodward J.R."/>
            <person name="Barrell B.G."/>
        </authorList>
    </citation>
    <scope>NUCLEOTIDE SEQUENCE [LARGE SCALE GENOMIC DNA]</scope>
    <source>
        <strain>TN</strain>
    </source>
</reference>
<gene>
    <name evidence="2" type="primary">atpE</name>
    <name type="ordered locus">ML1140</name>
</gene>
<sequence>MDPMIAQGALIGGGLIMAGGAIGAGIGDGMAGNALVSGIARQPEAQSRLFTPFFITVGLVEAAYFINLAFMALFVFATPVK</sequence>
<organism>
    <name type="scientific">Mycobacterium leprae (strain TN)</name>
    <dbReference type="NCBI Taxonomy" id="272631"/>
    <lineage>
        <taxon>Bacteria</taxon>
        <taxon>Bacillati</taxon>
        <taxon>Actinomycetota</taxon>
        <taxon>Actinomycetes</taxon>
        <taxon>Mycobacteriales</taxon>
        <taxon>Mycobacteriaceae</taxon>
        <taxon>Mycobacterium</taxon>
    </lineage>
</organism>
<dbReference type="EMBL" id="U15186">
    <property type="protein sequence ID" value="AAA63107.1"/>
    <property type="molecule type" value="Genomic_DNA"/>
</dbReference>
<dbReference type="EMBL" id="AL583920">
    <property type="protein sequence ID" value="CAC31521.1"/>
    <property type="molecule type" value="Genomic_DNA"/>
</dbReference>
<dbReference type="PIR" id="T09979">
    <property type="entry name" value="T09979"/>
</dbReference>
<dbReference type="RefSeq" id="NP_301834.1">
    <property type="nucleotide sequence ID" value="NC_002677.1"/>
</dbReference>
<dbReference type="RefSeq" id="WP_010908158.1">
    <property type="nucleotide sequence ID" value="NC_002677.1"/>
</dbReference>
<dbReference type="SMR" id="P45828"/>
<dbReference type="STRING" id="272631.gene:17574967"/>
<dbReference type="KEGG" id="mle:ML1140"/>
<dbReference type="PATRIC" id="fig|272631.5.peg.2062"/>
<dbReference type="Leproma" id="ML1140"/>
<dbReference type="eggNOG" id="COG0636">
    <property type="taxonomic scope" value="Bacteria"/>
</dbReference>
<dbReference type="HOGENOM" id="CLU_148047_1_2_11"/>
<dbReference type="OrthoDB" id="3578447at2"/>
<dbReference type="Proteomes" id="UP000000806">
    <property type="component" value="Chromosome"/>
</dbReference>
<dbReference type="GO" id="GO:0005886">
    <property type="term" value="C:plasma membrane"/>
    <property type="evidence" value="ECO:0007669"/>
    <property type="project" value="UniProtKB-SubCell"/>
</dbReference>
<dbReference type="GO" id="GO:0045259">
    <property type="term" value="C:proton-transporting ATP synthase complex"/>
    <property type="evidence" value="ECO:0007669"/>
    <property type="project" value="UniProtKB-KW"/>
</dbReference>
<dbReference type="GO" id="GO:0033177">
    <property type="term" value="C:proton-transporting two-sector ATPase complex, proton-transporting domain"/>
    <property type="evidence" value="ECO:0007669"/>
    <property type="project" value="InterPro"/>
</dbReference>
<dbReference type="GO" id="GO:0008289">
    <property type="term" value="F:lipid binding"/>
    <property type="evidence" value="ECO:0007669"/>
    <property type="project" value="UniProtKB-KW"/>
</dbReference>
<dbReference type="GO" id="GO:0046933">
    <property type="term" value="F:proton-transporting ATP synthase activity, rotational mechanism"/>
    <property type="evidence" value="ECO:0007669"/>
    <property type="project" value="UniProtKB-UniRule"/>
</dbReference>
<dbReference type="CDD" id="cd18185">
    <property type="entry name" value="ATP-synt_Fo_c_ATPE"/>
    <property type="match status" value="1"/>
</dbReference>
<dbReference type="Gene3D" id="1.20.20.10">
    <property type="entry name" value="F1F0 ATP synthase subunit C"/>
    <property type="match status" value="1"/>
</dbReference>
<dbReference type="HAMAP" id="MF_01396">
    <property type="entry name" value="ATP_synth_c_bact"/>
    <property type="match status" value="1"/>
</dbReference>
<dbReference type="InterPro" id="IPR005953">
    <property type="entry name" value="ATP_synth_csu_bac/chlpt"/>
</dbReference>
<dbReference type="InterPro" id="IPR000454">
    <property type="entry name" value="ATP_synth_F0_csu"/>
</dbReference>
<dbReference type="InterPro" id="IPR020537">
    <property type="entry name" value="ATP_synth_F0_csu_DDCD_BS"/>
</dbReference>
<dbReference type="InterPro" id="IPR038662">
    <property type="entry name" value="ATP_synth_F0_csu_sf"/>
</dbReference>
<dbReference type="InterPro" id="IPR002379">
    <property type="entry name" value="ATPase_proteolipid_c-like_dom"/>
</dbReference>
<dbReference type="InterPro" id="IPR035921">
    <property type="entry name" value="F/V-ATP_Csub_sf"/>
</dbReference>
<dbReference type="NCBIfam" id="TIGR01260">
    <property type="entry name" value="ATP_synt_c"/>
    <property type="match status" value="1"/>
</dbReference>
<dbReference type="NCBIfam" id="NF004532">
    <property type="entry name" value="PRK05880.1"/>
    <property type="match status" value="1"/>
</dbReference>
<dbReference type="Pfam" id="PF00137">
    <property type="entry name" value="ATP-synt_C"/>
    <property type="match status" value="1"/>
</dbReference>
<dbReference type="PRINTS" id="PR00124">
    <property type="entry name" value="ATPASEC"/>
</dbReference>
<dbReference type="SUPFAM" id="SSF81333">
    <property type="entry name" value="F1F0 ATP synthase subunit C"/>
    <property type="match status" value="1"/>
</dbReference>
<dbReference type="PROSITE" id="PS00605">
    <property type="entry name" value="ATPASE_C"/>
    <property type="match status" value="1"/>
</dbReference>
<feature type="chain" id="PRO_0000112153" description="ATP synthase subunit c">
    <location>
        <begin position="1"/>
        <end position="81"/>
    </location>
</feature>
<feature type="transmembrane region" description="Helical" evidence="2">
    <location>
        <begin position="4"/>
        <end position="24"/>
    </location>
</feature>
<feature type="transmembrane region" description="Helical" evidence="2">
    <location>
        <begin position="57"/>
        <end position="77"/>
    </location>
</feature>
<feature type="site" description="Reversibly protonated during proton transport" evidence="2">
    <location>
        <position position="61"/>
    </location>
</feature>
<evidence type="ECO:0000250" key="1"/>
<evidence type="ECO:0000255" key="2">
    <source>
        <dbReference type="HAMAP-Rule" id="MF_01396"/>
    </source>
</evidence>
<proteinExistence type="inferred from homology"/>